<keyword id="KW-0067">ATP-binding</keyword>
<keyword id="KW-0963">Cytoplasm</keyword>
<keyword id="KW-0418">Kinase</keyword>
<keyword id="KW-0460">Magnesium</keyword>
<keyword id="KW-0479">Metal-binding</keyword>
<keyword id="KW-0546">Nucleotide metabolism</keyword>
<keyword id="KW-0547">Nucleotide-binding</keyword>
<keyword id="KW-0597">Phosphoprotein</keyword>
<keyword id="KW-1185">Reference proteome</keyword>
<keyword id="KW-0808">Transferase</keyword>
<proteinExistence type="inferred from homology"/>
<organism>
    <name type="scientific">Pseudomonas putida (strain ATCC 47054 / DSM 6125 / CFBP 8728 / NCIMB 11950 / KT2440)</name>
    <dbReference type="NCBI Taxonomy" id="160488"/>
    <lineage>
        <taxon>Bacteria</taxon>
        <taxon>Pseudomonadati</taxon>
        <taxon>Pseudomonadota</taxon>
        <taxon>Gammaproteobacteria</taxon>
        <taxon>Pseudomonadales</taxon>
        <taxon>Pseudomonadaceae</taxon>
        <taxon>Pseudomonas</taxon>
    </lineage>
</organism>
<gene>
    <name evidence="1" type="primary">ndk</name>
    <name type="ordered locus">PP_0849</name>
</gene>
<feature type="chain" id="PRO_0000137025" description="Nucleoside diphosphate kinase">
    <location>
        <begin position="1"/>
        <end position="141"/>
    </location>
</feature>
<feature type="active site" description="Pros-phosphohistidine intermediate" evidence="1">
    <location>
        <position position="117"/>
    </location>
</feature>
<feature type="binding site" evidence="1">
    <location>
        <position position="11"/>
    </location>
    <ligand>
        <name>ATP</name>
        <dbReference type="ChEBI" id="CHEBI:30616"/>
    </ligand>
</feature>
<feature type="binding site" evidence="1">
    <location>
        <position position="59"/>
    </location>
    <ligand>
        <name>ATP</name>
        <dbReference type="ChEBI" id="CHEBI:30616"/>
    </ligand>
</feature>
<feature type="binding site" evidence="1">
    <location>
        <position position="87"/>
    </location>
    <ligand>
        <name>ATP</name>
        <dbReference type="ChEBI" id="CHEBI:30616"/>
    </ligand>
</feature>
<feature type="binding site" evidence="1">
    <location>
        <position position="93"/>
    </location>
    <ligand>
        <name>ATP</name>
        <dbReference type="ChEBI" id="CHEBI:30616"/>
    </ligand>
</feature>
<feature type="binding site" evidence="1">
    <location>
        <position position="104"/>
    </location>
    <ligand>
        <name>ATP</name>
        <dbReference type="ChEBI" id="CHEBI:30616"/>
    </ligand>
</feature>
<feature type="binding site" evidence="1">
    <location>
        <position position="114"/>
    </location>
    <ligand>
        <name>ATP</name>
        <dbReference type="ChEBI" id="CHEBI:30616"/>
    </ligand>
</feature>
<protein>
    <recommendedName>
        <fullName evidence="1">Nucleoside diphosphate kinase</fullName>
        <shortName evidence="1">NDK</shortName>
        <shortName evidence="1">NDP kinase</shortName>
        <ecNumber evidence="1">2.7.4.6</ecNumber>
    </recommendedName>
    <alternativeName>
        <fullName evidence="1">Nucleoside-2-P kinase</fullName>
    </alternativeName>
</protein>
<comment type="function">
    <text evidence="1">Major role in the synthesis of nucleoside triphosphates other than ATP. The ATP gamma phosphate is transferred to the NDP beta phosphate via a ping-pong mechanism, using a phosphorylated active-site intermediate.</text>
</comment>
<comment type="catalytic activity">
    <reaction evidence="1">
        <text>a 2'-deoxyribonucleoside 5'-diphosphate + ATP = a 2'-deoxyribonucleoside 5'-triphosphate + ADP</text>
        <dbReference type="Rhea" id="RHEA:44640"/>
        <dbReference type="ChEBI" id="CHEBI:30616"/>
        <dbReference type="ChEBI" id="CHEBI:61560"/>
        <dbReference type="ChEBI" id="CHEBI:73316"/>
        <dbReference type="ChEBI" id="CHEBI:456216"/>
        <dbReference type="EC" id="2.7.4.6"/>
    </reaction>
</comment>
<comment type="catalytic activity">
    <reaction evidence="1">
        <text>a ribonucleoside 5'-diphosphate + ATP = a ribonucleoside 5'-triphosphate + ADP</text>
        <dbReference type="Rhea" id="RHEA:18113"/>
        <dbReference type="ChEBI" id="CHEBI:30616"/>
        <dbReference type="ChEBI" id="CHEBI:57930"/>
        <dbReference type="ChEBI" id="CHEBI:61557"/>
        <dbReference type="ChEBI" id="CHEBI:456216"/>
        <dbReference type="EC" id="2.7.4.6"/>
    </reaction>
</comment>
<comment type="cofactor">
    <cofactor evidence="1">
        <name>Mg(2+)</name>
        <dbReference type="ChEBI" id="CHEBI:18420"/>
    </cofactor>
</comment>
<comment type="subunit">
    <text evidence="1">Homotetramer.</text>
</comment>
<comment type="subcellular location">
    <subcellularLocation>
        <location evidence="1">Cytoplasm</location>
    </subcellularLocation>
</comment>
<comment type="similarity">
    <text evidence="1">Belongs to the NDK family.</text>
</comment>
<dbReference type="EC" id="2.7.4.6" evidence="1"/>
<dbReference type="EMBL" id="AE015451">
    <property type="protein sequence ID" value="AAN66474.1"/>
    <property type="molecule type" value="Genomic_DNA"/>
</dbReference>
<dbReference type="RefSeq" id="NP_743010.1">
    <property type="nucleotide sequence ID" value="NC_002947.4"/>
</dbReference>
<dbReference type="RefSeq" id="WP_003248526.1">
    <property type="nucleotide sequence ID" value="NZ_CP169744.1"/>
</dbReference>
<dbReference type="SMR" id="Q88PK1"/>
<dbReference type="STRING" id="160488.PP_0849"/>
<dbReference type="PaxDb" id="160488-PP_0849"/>
<dbReference type="GeneID" id="83678202"/>
<dbReference type="KEGG" id="ppu:PP_0849"/>
<dbReference type="PATRIC" id="fig|160488.4.peg.909"/>
<dbReference type="eggNOG" id="COG0105">
    <property type="taxonomic scope" value="Bacteria"/>
</dbReference>
<dbReference type="HOGENOM" id="CLU_060216_8_1_6"/>
<dbReference type="OrthoDB" id="9801161at2"/>
<dbReference type="PhylomeDB" id="Q88PK1"/>
<dbReference type="BioCyc" id="PPUT160488:G1G01-924-MONOMER"/>
<dbReference type="Proteomes" id="UP000000556">
    <property type="component" value="Chromosome"/>
</dbReference>
<dbReference type="GO" id="GO:0005737">
    <property type="term" value="C:cytoplasm"/>
    <property type="evidence" value="ECO:0007669"/>
    <property type="project" value="UniProtKB-SubCell"/>
</dbReference>
<dbReference type="GO" id="GO:0005524">
    <property type="term" value="F:ATP binding"/>
    <property type="evidence" value="ECO:0007669"/>
    <property type="project" value="UniProtKB-UniRule"/>
</dbReference>
<dbReference type="GO" id="GO:0046872">
    <property type="term" value="F:metal ion binding"/>
    <property type="evidence" value="ECO:0007669"/>
    <property type="project" value="UniProtKB-KW"/>
</dbReference>
<dbReference type="GO" id="GO:0004550">
    <property type="term" value="F:nucleoside diphosphate kinase activity"/>
    <property type="evidence" value="ECO:0007669"/>
    <property type="project" value="UniProtKB-UniRule"/>
</dbReference>
<dbReference type="GO" id="GO:0006241">
    <property type="term" value="P:CTP biosynthetic process"/>
    <property type="evidence" value="ECO:0007669"/>
    <property type="project" value="UniProtKB-UniRule"/>
</dbReference>
<dbReference type="GO" id="GO:0006183">
    <property type="term" value="P:GTP biosynthetic process"/>
    <property type="evidence" value="ECO:0007669"/>
    <property type="project" value="UniProtKB-UniRule"/>
</dbReference>
<dbReference type="GO" id="GO:0006228">
    <property type="term" value="P:UTP biosynthetic process"/>
    <property type="evidence" value="ECO:0007669"/>
    <property type="project" value="UniProtKB-UniRule"/>
</dbReference>
<dbReference type="CDD" id="cd04413">
    <property type="entry name" value="NDPk_I"/>
    <property type="match status" value="1"/>
</dbReference>
<dbReference type="FunFam" id="3.30.70.141:FF:000001">
    <property type="entry name" value="Nucleoside diphosphate kinase"/>
    <property type="match status" value="1"/>
</dbReference>
<dbReference type="Gene3D" id="3.30.70.141">
    <property type="entry name" value="Nucleoside diphosphate kinase-like domain"/>
    <property type="match status" value="1"/>
</dbReference>
<dbReference type="HAMAP" id="MF_00451">
    <property type="entry name" value="NDP_kinase"/>
    <property type="match status" value="1"/>
</dbReference>
<dbReference type="InterPro" id="IPR034907">
    <property type="entry name" value="NDK-like_dom"/>
</dbReference>
<dbReference type="InterPro" id="IPR036850">
    <property type="entry name" value="NDK-like_dom_sf"/>
</dbReference>
<dbReference type="InterPro" id="IPR001564">
    <property type="entry name" value="Nucleoside_diP_kinase"/>
</dbReference>
<dbReference type="InterPro" id="IPR023005">
    <property type="entry name" value="Nucleoside_diP_kinase_AS"/>
</dbReference>
<dbReference type="NCBIfam" id="NF001908">
    <property type="entry name" value="PRK00668.1"/>
    <property type="match status" value="1"/>
</dbReference>
<dbReference type="PANTHER" id="PTHR46161">
    <property type="entry name" value="NUCLEOSIDE DIPHOSPHATE KINASE"/>
    <property type="match status" value="1"/>
</dbReference>
<dbReference type="PANTHER" id="PTHR46161:SF3">
    <property type="entry name" value="NUCLEOSIDE DIPHOSPHATE KINASE DDB_G0292928-RELATED"/>
    <property type="match status" value="1"/>
</dbReference>
<dbReference type="Pfam" id="PF00334">
    <property type="entry name" value="NDK"/>
    <property type="match status" value="1"/>
</dbReference>
<dbReference type="PRINTS" id="PR01243">
    <property type="entry name" value="NUCDPKINASE"/>
</dbReference>
<dbReference type="SMART" id="SM00562">
    <property type="entry name" value="NDK"/>
    <property type="match status" value="1"/>
</dbReference>
<dbReference type="SUPFAM" id="SSF54919">
    <property type="entry name" value="Nucleoside diphosphate kinase, NDK"/>
    <property type="match status" value="1"/>
</dbReference>
<dbReference type="PROSITE" id="PS00469">
    <property type="entry name" value="NDPK"/>
    <property type="match status" value="1"/>
</dbReference>
<dbReference type="PROSITE" id="PS51374">
    <property type="entry name" value="NDPK_LIKE"/>
    <property type="match status" value="1"/>
</dbReference>
<name>NDK_PSEPK</name>
<accession>Q88PK1</accession>
<reference key="1">
    <citation type="journal article" date="2002" name="Environ. Microbiol.">
        <title>Complete genome sequence and comparative analysis of the metabolically versatile Pseudomonas putida KT2440.</title>
        <authorList>
            <person name="Nelson K.E."/>
            <person name="Weinel C."/>
            <person name="Paulsen I.T."/>
            <person name="Dodson R.J."/>
            <person name="Hilbert H."/>
            <person name="Martins dos Santos V.A.P."/>
            <person name="Fouts D.E."/>
            <person name="Gill S.R."/>
            <person name="Pop M."/>
            <person name="Holmes M."/>
            <person name="Brinkac L.M."/>
            <person name="Beanan M.J."/>
            <person name="DeBoy R.T."/>
            <person name="Daugherty S.C."/>
            <person name="Kolonay J.F."/>
            <person name="Madupu R."/>
            <person name="Nelson W.C."/>
            <person name="White O."/>
            <person name="Peterson J.D."/>
            <person name="Khouri H.M."/>
            <person name="Hance I."/>
            <person name="Chris Lee P."/>
            <person name="Holtzapple E.K."/>
            <person name="Scanlan D."/>
            <person name="Tran K."/>
            <person name="Moazzez A."/>
            <person name="Utterback T.R."/>
            <person name="Rizzo M."/>
            <person name="Lee K."/>
            <person name="Kosack D."/>
            <person name="Moestl D."/>
            <person name="Wedler H."/>
            <person name="Lauber J."/>
            <person name="Stjepandic D."/>
            <person name="Hoheisel J."/>
            <person name="Straetz M."/>
            <person name="Heim S."/>
            <person name="Kiewitz C."/>
            <person name="Eisen J.A."/>
            <person name="Timmis K.N."/>
            <person name="Duesterhoeft A."/>
            <person name="Tuemmler B."/>
            <person name="Fraser C.M."/>
        </authorList>
    </citation>
    <scope>NUCLEOTIDE SEQUENCE [LARGE SCALE GENOMIC DNA]</scope>
    <source>
        <strain>ATCC 47054 / DSM 6125 / CFBP 8728 / NCIMB 11950 / KT2440</strain>
    </source>
</reference>
<sequence length="141" mass="15044">MAVQRTFSIIKPDAVAKNVIGKITTRFEEAGLKIVASKMKQLSKAEAEGFYAEHSERGFFGDLVAFMTSGPVVVQVLEGENAIAKNRELMGATNPKEAAAGTIRADFAESIDANAVHGSDSEAAAAREIAYFFAATEVTTR</sequence>
<evidence type="ECO:0000255" key="1">
    <source>
        <dbReference type="HAMAP-Rule" id="MF_00451"/>
    </source>
</evidence>